<comment type="function">
    <text evidence="1">This is one of the proteins that bind and probably mediate the attachment of the 5S RNA into the large ribosomal subunit, where it forms part of the central protuberance. In the 70S ribosome it contacts protein S13 of the 30S subunit (bridge B1b), connecting the 2 subunits; this bridge is implicated in subunit movement. Contacts the P site tRNA; the 5S rRNA and some of its associated proteins might help stabilize positioning of ribosome-bound tRNAs.</text>
</comment>
<comment type="subunit">
    <text evidence="1">Part of the 50S ribosomal subunit; part of the 5S rRNA/L5/L18/L25 subcomplex. Contacts the 5S rRNA and the P site tRNA. Forms a bridge to the 30S subunit in the 70S ribosome.</text>
</comment>
<comment type="similarity">
    <text evidence="1">Belongs to the universal ribosomal protein uL5 family.</text>
</comment>
<gene>
    <name evidence="1" type="primary">rplE</name>
    <name type="ordered locus">AAur_2936</name>
</gene>
<organism>
    <name type="scientific">Paenarthrobacter aurescens (strain TC1)</name>
    <dbReference type="NCBI Taxonomy" id="290340"/>
    <lineage>
        <taxon>Bacteria</taxon>
        <taxon>Bacillati</taxon>
        <taxon>Actinomycetota</taxon>
        <taxon>Actinomycetes</taxon>
        <taxon>Micrococcales</taxon>
        <taxon>Micrococcaceae</taxon>
        <taxon>Paenarthrobacter</taxon>
    </lineage>
</organism>
<feature type="chain" id="PRO_1000166105" description="Large ribosomal subunit protein uL5">
    <location>
        <begin position="1"/>
        <end position="192"/>
    </location>
</feature>
<dbReference type="EMBL" id="CP000474">
    <property type="protein sequence ID" value="ABM09858.1"/>
    <property type="molecule type" value="Genomic_DNA"/>
</dbReference>
<dbReference type="RefSeq" id="WP_011775585.1">
    <property type="nucleotide sequence ID" value="NC_008711.1"/>
</dbReference>
<dbReference type="SMR" id="A1R8T3"/>
<dbReference type="STRING" id="290340.AAur_2936"/>
<dbReference type="KEGG" id="aau:AAur_2936"/>
<dbReference type="eggNOG" id="COG0094">
    <property type="taxonomic scope" value="Bacteria"/>
</dbReference>
<dbReference type="HOGENOM" id="CLU_061015_2_1_11"/>
<dbReference type="OrthoDB" id="9806626at2"/>
<dbReference type="Proteomes" id="UP000000637">
    <property type="component" value="Chromosome"/>
</dbReference>
<dbReference type="GO" id="GO:1990904">
    <property type="term" value="C:ribonucleoprotein complex"/>
    <property type="evidence" value="ECO:0007669"/>
    <property type="project" value="UniProtKB-KW"/>
</dbReference>
<dbReference type="GO" id="GO:0005840">
    <property type="term" value="C:ribosome"/>
    <property type="evidence" value="ECO:0007669"/>
    <property type="project" value="UniProtKB-KW"/>
</dbReference>
<dbReference type="GO" id="GO:0019843">
    <property type="term" value="F:rRNA binding"/>
    <property type="evidence" value="ECO:0007669"/>
    <property type="project" value="UniProtKB-UniRule"/>
</dbReference>
<dbReference type="GO" id="GO:0003735">
    <property type="term" value="F:structural constituent of ribosome"/>
    <property type="evidence" value="ECO:0007669"/>
    <property type="project" value="InterPro"/>
</dbReference>
<dbReference type="GO" id="GO:0000049">
    <property type="term" value="F:tRNA binding"/>
    <property type="evidence" value="ECO:0007669"/>
    <property type="project" value="UniProtKB-UniRule"/>
</dbReference>
<dbReference type="GO" id="GO:0006412">
    <property type="term" value="P:translation"/>
    <property type="evidence" value="ECO:0007669"/>
    <property type="project" value="UniProtKB-UniRule"/>
</dbReference>
<dbReference type="FunFam" id="3.30.1440.10:FF:000001">
    <property type="entry name" value="50S ribosomal protein L5"/>
    <property type="match status" value="1"/>
</dbReference>
<dbReference type="Gene3D" id="3.30.1440.10">
    <property type="match status" value="1"/>
</dbReference>
<dbReference type="HAMAP" id="MF_01333_B">
    <property type="entry name" value="Ribosomal_uL5_B"/>
    <property type="match status" value="1"/>
</dbReference>
<dbReference type="InterPro" id="IPR002132">
    <property type="entry name" value="Ribosomal_uL5"/>
</dbReference>
<dbReference type="InterPro" id="IPR020930">
    <property type="entry name" value="Ribosomal_uL5_bac-type"/>
</dbReference>
<dbReference type="InterPro" id="IPR031309">
    <property type="entry name" value="Ribosomal_uL5_C"/>
</dbReference>
<dbReference type="InterPro" id="IPR022803">
    <property type="entry name" value="Ribosomal_uL5_dom_sf"/>
</dbReference>
<dbReference type="InterPro" id="IPR031310">
    <property type="entry name" value="Ribosomal_uL5_N"/>
</dbReference>
<dbReference type="NCBIfam" id="NF000585">
    <property type="entry name" value="PRK00010.1"/>
    <property type="match status" value="1"/>
</dbReference>
<dbReference type="PANTHER" id="PTHR11994">
    <property type="entry name" value="60S RIBOSOMAL PROTEIN L11-RELATED"/>
    <property type="match status" value="1"/>
</dbReference>
<dbReference type="Pfam" id="PF00281">
    <property type="entry name" value="Ribosomal_L5"/>
    <property type="match status" value="1"/>
</dbReference>
<dbReference type="Pfam" id="PF00673">
    <property type="entry name" value="Ribosomal_L5_C"/>
    <property type="match status" value="1"/>
</dbReference>
<dbReference type="PIRSF" id="PIRSF002161">
    <property type="entry name" value="Ribosomal_L5"/>
    <property type="match status" value="1"/>
</dbReference>
<dbReference type="SUPFAM" id="SSF55282">
    <property type="entry name" value="RL5-like"/>
    <property type="match status" value="1"/>
</dbReference>
<evidence type="ECO:0000255" key="1">
    <source>
        <dbReference type="HAMAP-Rule" id="MF_01333"/>
    </source>
</evidence>
<evidence type="ECO:0000305" key="2"/>
<proteinExistence type="inferred from homology"/>
<name>RL5_PAEAT</name>
<accession>A1R8T3</accession>
<protein>
    <recommendedName>
        <fullName evidence="1">Large ribosomal subunit protein uL5</fullName>
    </recommendedName>
    <alternativeName>
        <fullName evidence="2">50S ribosomal protein L5</fullName>
    </alternativeName>
</protein>
<keyword id="KW-0687">Ribonucleoprotein</keyword>
<keyword id="KW-0689">Ribosomal protein</keyword>
<keyword id="KW-0694">RNA-binding</keyword>
<keyword id="KW-0699">rRNA-binding</keyword>
<keyword id="KW-0820">tRNA-binding</keyword>
<reference key="1">
    <citation type="journal article" date="2006" name="PLoS Genet.">
        <title>Secrets of soil survival revealed by the genome sequence of Arthrobacter aurescens TC1.</title>
        <authorList>
            <person name="Mongodin E.F."/>
            <person name="Shapir N."/>
            <person name="Daugherty S.C."/>
            <person name="DeBoy R.T."/>
            <person name="Emerson J.B."/>
            <person name="Shvartzbeyn A."/>
            <person name="Radune D."/>
            <person name="Vamathevan J."/>
            <person name="Riggs F."/>
            <person name="Grinberg V."/>
            <person name="Khouri H.M."/>
            <person name="Wackett L.P."/>
            <person name="Nelson K.E."/>
            <person name="Sadowsky M.J."/>
        </authorList>
    </citation>
    <scope>NUCLEOTIDE SEQUENCE [LARGE SCALE GENOMIC DNA]</scope>
    <source>
        <strain>TC1</strain>
    </source>
</reference>
<sequence length="192" mass="21499">MTETLETPVKIVPRLKTKYAETIKKSLQDEFSYANVNQVPRLVKVVVNMGVGDAAKDSKLIDGAVRDLTLITGQKPQVTKARKSIAQFKLREGMPIGAHATLRGDRMWEFVDRLVSLALPRIRDFRGLNGKQFDGNGNYTFGLTEQVMFHEIDQDSIDRVRGMDITVVTTAKTDDEGRALLKALGFPFKTEN</sequence>